<organism>
    <name type="scientific">Staphylococcus aureus (strain USA300)</name>
    <dbReference type="NCBI Taxonomy" id="367830"/>
    <lineage>
        <taxon>Bacteria</taxon>
        <taxon>Bacillati</taxon>
        <taxon>Bacillota</taxon>
        <taxon>Bacilli</taxon>
        <taxon>Bacillales</taxon>
        <taxon>Staphylococcaceae</taxon>
        <taxon>Staphylococcus</taxon>
    </lineage>
</organism>
<accession>Q2FGJ3</accession>
<keyword id="KW-0963">Cytoplasm</keyword>
<keyword id="KW-0251">Elongation factor</keyword>
<keyword id="KW-0648">Protein biosynthesis</keyword>
<proteinExistence type="inferred from homology"/>
<gene>
    <name evidence="1" type="primary">efp</name>
    <name type="ordered locus">SAUSA300_1490</name>
</gene>
<feature type="chain" id="PRO_1000010865" description="Elongation factor P">
    <location>
        <begin position="1"/>
        <end position="185"/>
    </location>
</feature>
<name>EFP_STAA3</name>
<evidence type="ECO:0000255" key="1">
    <source>
        <dbReference type="HAMAP-Rule" id="MF_00141"/>
    </source>
</evidence>
<reference key="1">
    <citation type="journal article" date="2006" name="Lancet">
        <title>Complete genome sequence of USA300, an epidemic clone of community-acquired meticillin-resistant Staphylococcus aureus.</title>
        <authorList>
            <person name="Diep B.A."/>
            <person name="Gill S.R."/>
            <person name="Chang R.F."/>
            <person name="Phan T.H."/>
            <person name="Chen J.H."/>
            <person name="Davidson M.G."/>
            <person name="Lin F."/>
            <person name="Lin J."/>
            <person name="Carleton H.A."/>
            <person name="Mongodin E.F."/>
            <person name="Sensabaugh G.F."/>
            <person name="Perdreau-Remington F."/>
        </authorList>
    </citation>
    <scope>NUCLEOTIDE SEQUENCE [LARGE SCALE GENOMIC DNA]</scope>
    <source>
        <strain>USA300</strain>
    </source>
</reference>
<protein>
    <recommendedName>
        <fullName evidence="1">Elongation factor P</fullName>
        <shortName evidence="1">EF-P</shortName>
    </recommendedName>
</protein>
<dbReference type="EMBL" id="CP000255">
    <property type="protein sequence ID" value="ABD22710.1"/>
    <property type="molecule type" value="Genomic_DNA"/>
</dbReference>
<dbReference type="RefSeq" id="WP_000626504.1">
    <property type="nucleotide sequence ID" value="NZ_CP027476.1"/>
</dbReference>
<dbReference type="SMR" id="Q2FGJ3"/>
<dbReference type="KEGG" id="saa:SAUSA300_1490"/>
<dbReference type="HOGENOM" id="CLU_074944_0_1_9"/>
<dbReference type="OMA" id="WSVVEFQ"/>
<dbReference type="UniPathway" id="UPA00345"/>
<dbReference type="Proteomes" id="UP000001939">
    <property type="component" value="Chromosome"/>
</dbReference>
<dbReference type="GO" id="GO:0005737">
    <property type="term" value="C:cytoplasm"/>
    <property type="evidence" value="ECO:0007669"/>
    <property type="project" value="UniProtKB-SubCell"/>
</dbReference>
<dbReference type="GO" id="GO:0003746">
    <property type="term" value="F:translation elongation factor activity"/>
    <property type="evidence" value="ECO:0007669"/>
    <property type="project" value="UniProtKB-UniRule"/>
</dbReference>
<dbReference type="GO" id="GO:0043043">
    <property type="term" value="P:peptide biosynthetic process"/>
    <property type="evidence" value="ECO:0007669"/>
    <property type="project" value="InterPro"/>
</dbReference>
<dbReference type="CDD" id="cd04470">
    <property type="entry name" value="S1_EF-P_repeat_1"/>
    <property type="match status" value="1"/>
</dbReference>
<dbReference type="CDD" id="cd05794">
    <property type="entry name" value="S1_EF-P_repeat_2"/>
    <property type="match status" value="1"/>
</dbReference>
<dbReference type="FunFam" id="2.30.30.30:FF:000010">
    <property type="entry name" value="Elongation factor P"/>
    <property type="match status" value="1"/>
</dbReference>
<dbReference type="FunFam" id="2.40.50.140:FF:000004">
    <property type="entry name" value="Elongation factor P"/>
    <property type="match status" value="1"/>
</dbReference>
<dbReference type="FunFam" id="2.40.50.140:FF:000009">
    <property type="entry name" value="Elongation factor P"/>
    <property type="match status" value="1"/>
</dbReference>
<dbReference type="Gene3D" id="2.30.30.30">
    <property type="match status" value="1"/>
</dbReference>
<dbReference type="Gene3D" id="2.40.50.140">
    <property type="entry name" value="Nucleic acid-binding proteins"/>
    <property type="match status" value="2"/>
</dbReference>
<dbReference type="HAMAP" id="MF_00141">
    <property type="entry name" value="EF_P"/>
    <property type="match status" value="1"/>
</dbReference>
<dbReference type="InterPro" id="IPR015365">
    <property type="entry name" value="Elong-fact-P_C"/>
</dbReference>
<dbReference type="InterPro" id="IPR012340">
    <property type="entry name" value="NA-bd_OB-fold"/>
</dbReference>
<dbReference type="InterPro" id="IPR014722">
    <property type="entry name" value="Rib_uL2_dom2"/>
</dbReference>
<dbReference type="InterPro" id="IPR020599">
    <property type="entry name" value="Transl_elong_fac_P/YeiP"/>
</dbReference>
<dbReference type="InterPro" id="IPR013185">
    <property type="entry name" value="Transl_elong_KOW-like"/>
</dbReference>
<dbReference type="InterPro" id="IPR001059">
    <property type="entry name" value="Transl_elong_P/YeiP_cen"/>
</dbReference>
<dbReference type="InterPro" id="IPR013852">
    <property type="entry name" value="Transl_elong_P/YeiP_CS"/>
</dbReference>
<dbReference type="InterPro" id="IPR011768">
    <property type="entry name" value="Transl_elongation_fac_P"/>
</dbReference>
<dbReference type="InterPro" id="IPR008991">
    <property type="entry name" value="Translation_prot_SH3-like_sf"/>
</dbReference>
<dbReference type="NCBIfam" id="TIGR00038">
    <property type="entry name" value="efp"/>
    <property type="match status" value="1"/>
</dbReference>
<dbReference type="NCBIfam" id="NF001810">
    <property type="entry name" value="PRK00529.1"/>
    <property type="match status" value="1"/>
</dbReference>
<dbReference type="PANTHER" id="PTHR30053">
    <property type="entry name" value="ELONGATION FACTOR P"/>
    <property type="match status" value="1"/>
</dbReference>
<dbReference type="PANTHER" id="PTHR30053:SF12">
    <property type="entry name" value="ELONGATION FACTOR P (EF-P) FAMILY PROTEIN"/>
    <property type="match status" value="1"/>
</dbReference>
<dbReference type="Pfam" id="PF01132">
    <property type="entry name" value="EFP"/>
    <property type="match status" value="1"/>
</dbReference>
<dbReference type="Pfam" id="PF08207">
    <property type="entry name" value="EFP_N"/>
    <property type="match status" value="1"/>
</dbReference>
<dbReference type="Pfam" id="PF09285">
    <property type="entry name" value="Elong-fact-P_C"/>
    <property type="match status" value="1"/>
</dbReference>
<dbReference type="PIRSF" id="PIRSF005901">
    <property type="entry name" value="EF-P"/>
    <property type="match status" value="1"/>
</dbReference>
<dbReference type="SMART" id="SM01185">
    <property type="entry name" value="EFP"/>
    <property type="match status" value="1"/>
</dbReference>
<dbReference type="SMART" id="SM00841">
    <property type="entry name" value="Elong-fact-P_C"/>
    <property type="match status" value="1"/>
</dbReference>
<dbReference type="SUPFAM" id="SSF50249">
    <property type="entry name" value="Nucleic acid-binding proteins"/>
    <property type="match status" value="2"/>
</dbReference>
<dbReference type="SUPFAM" id="SSF50104">
    <property type="entry name" value="Translation proteins SH3-like domain"/>
    <property type="match status" value="1"/>
</dbReference>
<dbReference type="PROSITE" id="PS01275">
    <property type="entry name" value="EFP"/>
    <property type="match status" value="1"/>
</dbReference>
<comment type="function">
    <text evidence="1">Involved in peptide bond synthesis. Stimulates efficient translation and peptide-bond synthesis on native or reconstituted 70S ribosomes in vitro. Probably functions indirectly by altering the affinity of the ribosome for aminoacyl-tRNA, thus increasing their reactivity as acceptors for peptidyl transferase.</text>
</comment>
<comment type="pathway">
    <text evidence="1">Protein biosynthesis; polypeptide chain elongation.</text>
</comment>
<comment type="subcellular location">
    <subcellularLocation>
        <location evidence="1">Cytoplasm</location>
    </subcellularLocation>
</comment>
<comment type="similarity">
    <text evidence="1">Belongs to the elongation factor P family.</text>
</comment>
<sequence length="185" mass="20554">MISVNDFKTGLTISVDNAIWKVIDFQHVKPGKGSAFVRSKLRNLRTGAIQEKTFRAGEKVEPAMIENRRMQYLYADGDNHVFMDNESFEQTELSSDYLKEELNYLKEGMEVQIQTYEGETIGVELPKTVELTVTETEPGIKGDTATGATKSATVETGYTLNVPLFVNEGDVLIINTGDGSYISRG</sequence>